<accession>P9WMP5</accession>
<accession>L0T5L2</accession>
<accession>O33357</accession>
<comment type="function">
    <text evidence="1">Catalyzes an early step in the biosynthesis of tetrapyrroles. Binds two molecules of 5-aminolevulinate per subunit, each at a distinct site, and catalyzes their condensation to form porphobilinogen (By similarity).</text>
</comment>
<comment type="catalytic activity">
    <reaction>
        <text>2 5-aminolevulinate = porphobilinogen + 2 H2O + H(+)</text>
        <dbReference type="Rhea" id="RHEA:24064"/>
        <dbReference type="ChEBI" id="CHEBI:15377"/>
        <dbReference type="ChEBI" id="CHEBI:15378"/>
        <dbReference type="ChEBI" id="CHEBI:58126"/>
        <dbReference type="ChEBI" id="CHEBI:356416"/>
        <dbReference type="EC" id="4.2.1.24"/>
    </reaction>
</comment>
<comment type="pathway">
    <text>Porphyrin-containing compound metabolism; protoporphyrin-IX biosynthesis; coproporphyrinogen-III from 5-aminolevulinate: step 1/4.</text>
</comment>
<comment type="subunit">
    <text evidence="1">Homooctamer.</text>
</comment>
<comment type="similarity">
    <text evidence="2">Belongs to the ALAD family.</text>
</comment>
<dbReference type="EC" id="4.2.1.24"/>
<dbReference type="EMBL" id="AL123456">
    <property type="protein sequence ID" value="CCP43249.1"/>
    <property type="molecule type" value="Genomic_DNA"/>
</dbReference>
<dbReference type="PIR" id="E70509">
    <property type="entry name" value="E70509"/>
</dbReference>
<dbReference type="RefSeq" id="NP_215026.1">
    <property type="nucleotide sequence ID" value="NC_000962.3"/>
</dbReference>
<dbReference type="RefSeq" id="WP_003898491.1">
    <property type="nucleotide sequence ID" value="NZ_NVQJ01000002.1"/>
</dbReference>
<dbReference type="SMR" id="P9WMP5"/>
<dbReference type="FunCoup" id="P9WMP5">
    <property type="interactions" value="529"/>
</dbReference>
<dbReference type="STRING" id="83332.Rv0512"/>
<dbReference type="PaxDb" id="83332-Rv0512"/>
<dbReference type="DNASU" id="887312"/>
<dbReference type="GeneID" id="887312"/>
<dbReference type="KEGG" id="mtu:Rv0512"/>
<dbReference type="KEGG" id="mtv:RVBD_0512"/>
<dbReference type="PATRIC" id="fig|83332.111.peg.564"/>
<dbReference type="TubercuList" id="Rv0512"/>
<dbReference type="eggNOG" id="COG0113">
    <property type="taxonomic scope" value="Bacteria"/>
</dbReference>
<dbReference type="InParanoid" id="P9WMP5"/>
<dbReference type="OrthoDB" id="9805001at2"/>
<dbReference type="PhylomeDB" id="P9WMP5"/>
<dbReference type="UniPathway" id="UPA00251">
    <property type="reaction ID" value="UER00318"/>
</dbReference>
<dbReference type="Proteomes" id="UP000001584">
    <property type="component" value="Chromosome"/>
</dbReference>
<dbReference type="GO" id="GO:0005829">
    <property type="term" value="C:cytosol"/>
    <property type="evidence" value="ECO:0000318"/>
    <property type="project" value="GO_Central"/>
</dbReference>
<dbReference type="GO" id="GO:0009274">
    <property type="term" value="C:peptidoglycan-based cell wall"/>
    <property type="evidence" value="ECO:0007005"/>
    <property type="project" value="MTBBASE"/>
</dbReference>
<dbReference type="GO" id="GO:0004655">
    <property type="term" value="F:porphobilinogen synthase activity"/>
    <property type="evidence" value="ECO:0000318"/>
    <property type="project" value="GO_Central"/>
</dbReference>
<dbReference type="GO" id="GO:0008270">
    <property type="term" value="F:zinc ion binding"/>
    <property type="evidence" value="ECO:0000318"/>
    <property type="project" value="GO_Central"/>
</dbReference>
<dbReference type="GO" id="GO:0006783">
    <property type="term" value="P:heme biosynthetic process"/>
    <property type="evidence" value="ECO:0000318"/>
    <property type="project" value="GO_Central"/>
</dbReference>
<dbReference type="GO" id="GO:0006782">
    <property type="term" value="P:protoporphyrinogen IX biosynthetic process"/>
    <property type="evidence" value="ECO:0007669"/>
    <property type="project" value="UniProtKB-UniPathway"/>
</dbReference>
<dbReference type="CDD" id="cd00384">
    <property type="entry name" value="ALAD_PBGS"/>
    <property type="match status" value="1"/>
</dbReference>
<dbReference type="FunFam" id="3.20.20.70:FF:000019">
    <property type="entry name" value="Delta-aminolevulinic acid dehydratase"/>
    <property type="match status" value="1"/>
</dbReference>
<dbReference type="Gene3D" id="3.20.20.70">
    <property type="entry name" value="Aldolase class I"/>
    <property type="match status" value="1"/>
</dbReference>
<dbReference type="InterPro" id="IPR001731">
    <property type="entry name" value="ALAD"/>
</dbReference>
<dbReference type="InterPro" id="IPR030656">
    <property type="entry name" value="ALAD_AS"/>
</dbReference>
<dbReference type="InterPro" id="IPR013785">
    <property type="entry name" value="Aldolase_TIM"/>
</dbReference>
<dbReference type="NCBIfam" id="NF006762">
    <property type="entry name" value="PRK09283.1"/>
    <property type="match status" value="1"/>
</dbReference>
<dbReference type="PANTHER" id="PTHR11458">
    <property type="entry name" value="DELTA-AMINOLEVULINIC ACID DEHYDRATASE"/>
    <property type="match status" value="1"/>
</dbReference>
<dbReference type="PANTHER" id="PTHR11458:SF0">
    <property type="entry name" value="DELTA-AMINOLEVULINIC ACID DEHYDRATASE"/>
    <property type="match status" value="1"/>
</dbReference>
<dbReference type="Pfam" id="PF00490">
    <property type="entry name" value="ALAD"/>
    <property type="match status" value="1"/>
</dbReference>
<dbReference type="PIRSF" id="PIRSF001415">
    <property type="entry name" value="Porphbilin_synth"/>
    <property type="match status" value="1"/>
</dbReference>
<dbReference type="PRINTS" id="PR00144">
    <property type="entry name" value="DALDHYDRTASE"/>
</dbReference>
<dbReference type="SMART" id="SM01004">
    <property type="entry name" value="ALAD"/>
    <property type="match status" value="1"/>
</dbReference>
<dbReference type="SUPFAM" id="SSF51569">
    <property type="entry name" value="Aldolase"/>
    <property type="match status" value="1"/>
</dbReference>
<dbReference type="PROSITE" id="PS00169">
    <property type="entry name" value="D_ALA_DEHYDRATASE"/>
    <property type="match status" value="1"/>
</dbReference>
<keyword id="KW-0350">Heme biosynthesis</keyword>
<keyword id="KW-0456">Lyase</keyword>
<keyword id="KW-0460">Magnesium</keyword>
<keyword id="KW-0479">Metal-binding</keyword>
<keyword id="KW-0627">Porphyrin biosynthesis</keyword>
<keyword id="KW-1185">Reference proteome</keyword>
<reference key="1">
    <citation type="journal article" date="1998" name="Nature">
        <title>Deciphering the biology of Mycobacterium tuberculosis from the complete genome sequence.</title>
        <authorList>
            <person name="Cole S.T."/>
            <person name="Brosch R."/>
            <person name="Parkhill J."/>
            <person name="Garnier T."/>
            <person name="Churcher C.M."/>
            <person name="Harris D.E."/>
            <person name="Gordon S.V."/>
            <person name="Eiglmeier K."/>
            <person name="Gas S."/>
            <person name="Barry C.E. III"/>
            <person name="Tekaia F."/>
            <person name="Badcock K."/>
            <person name="Basham D."/>
            <person name="Brown D."/>
            <person name="Chillingworth T."/>
            <person name="Connor R."/>
            <person name="Davies R.M."/>
            <person name="Devlin K."/>
            <person name="Feltwell T."/>
            <person name="Gentles S."/>
            <person name="Hamlin N."/>
            <person name="Holroyd S."/>
            <person name="Hornsby T."/>
            <person name="Jagels K."/>
            <person name="Krogh A."/>
            <person name="McLean J."/>
            <person name="Moule S."/>
            <person name="Murphy L.D."/>
            <person name="Oliver S."/>
            <person name="Osborne J."/>
            <person name="Quail M.A."/>
            <person name="Rajandream M.A."/>
            <person name="Rogers J."/>
            <person name="Rutter S."/>
            <person name="Seeger K."/>
            <person name="Skelton S."/>
            <person name="Squares S."/>
            <person name="Squares R."/>
            <person name="Sulston J.E."/>
            <person name="Taylor K."/>
            <person name="Whitehead S."/>
            <person name="Barrell B.G."/>
        </authorList>
    </citation>
    <scope>NUCLEOTIDE SEQUENCE [LARGE SCALE GENOMIC DNA]</scope>
    <source>
        <strain>ATCC 25618 / H37Rv</strain>
    </source>
</reference>
<reference key="2">
    <citation type="journal article" date="2011" name="Mol. Cell. Proteomics">
        <title>Proteogenomic analysis of Mycobacterium tuberculosis by high resolution mass spectrometry.</title>
        <authorList>
            <person name="Kelkar D.S."/>
            <person name="Kumar D."/>
            <person name="Kumar P."/>
            <person name="Balakrishnan L."/>
            <person name="Muthusamy B."/>
            <person name="Yadav A.K."/>
            <person name="Shrivastava P."/>
            <person name="Marimuthu A."/>
            <person name="Anand S."/>
            <person name="Sundaram H."/>
            <person name="Kingsbury R."/>
            <person name="Harsha H.C."/>
            <person name="Nair B."/>
            <person name="Prasad T.S."/>
            <person name="Chauhan D.S."/>
            <person name="Katoch K."/>
            <person name="Katoch V.M."/>
            <person name="Kumar P."/>
            <person name="Chaerkady R."/>
            <person name="Ramachandran S."/>
            <person name="Dash D."/>
            <person name="Pandey A."/>
        </authorList>
    </citation>
    <scope>IDENTIFICATION BY MASS SPECTROMETRY [LARGE SCALE ANALYSIS]</scope>
    <source>
        <strain>ATCC 25618 / H37Rv</strain>
    </source>
</reference>
<evidence type="ECO:0000250" key="1"/>
<evidence type="ECO:0000305" key="2"/>
<protein>
    <recommendedName>
        <fullName>Delta-aminolevulinic acid dehydratase</fullName>
        <shortName>ALAD</shortName>
        <shortName>ALADH</shortName>
        <ecNumber>4.2.1.24</ecNumber>
    </recommendedName>
    <alternativeName>
        <fullName>Porphobilinogen synthase</fullName>
    </alternativeName>
</protein>
<feature type="chain" id="PRO_0000140505" description="Delta-aminolevulinic acid dehydratase">
    <location>
        <begin position="1"/>
        <end position="329"/>
    </location>
</feature>
<feature type="active site" description="Schiff-base intermediate with substrate" evidence="1">
    <location>
        <position position="202"/>
    </location>
</feature>
<feature type="active site" description="Schiff-base intermediate with substrate" evidence="1">
    <location>
        <position position="254"/>
    </location>
</feature>
<feature type="binding site" evidence="1">
    <location>
        <position position="212"/>
    </location>
    <ligand>
        <name>5-aminolevulinate</name>
        <dbReference type="ChEBI" id="CHEBI:356416"/>
        <label>1</label>
    </ligand>
</feature>
<feature type="binding site" evidence="1">
    <location>
        <position position="223"/>
    </location>
    <ligand>
        <name>5-aminolevulinate</name>
        <dbReference type="ChEBI" id="CHEBI:356416"/>
        <label>1</label>
    </ligand>
</feature>
<feature type="binding site" evidence="1">
    <location>
        <position position="239"/>
    </location>
    <ligand>
        <name>Mg(2+)</name>
        <dbReference type="ChEBI" id="CHEBI:18420"/>
    </ligand>
</feature>
<feature type="binding site" evidence="1">
    <location>
        <position position="280"/>
    </location>
    <ligand>
        <name>5-aminolevulinate</name>
        <dbReference type="ChEBI" id="CHEBI:356416"/>
        <label>2</label>
    </ligand>
</feature>
<feature type="binding site" evidence="1">
    <location>
        <position position="319"/>
    </location>
    <ligand>
        <name>5-aminolevulinate</name>
        <dbReference type="ChEBI" id="CHEBI:356416"/>
        <label>2</label>
    </ligand>
</feature>
<proteinExistence type="evidence at protein level"/>
<organism>
    <name type="scientific">Mycobacterium tuberculosis (strain ATCC 25618 / H37Rv)</name>
    <dbReference type="NCBI Taxonomy" id="83332"/>
    <lineage>
        <taxon>Bacteria</taxon>
        <taxon>Bacillati</taxon>
        <taxon>Actinomycetota</taxon>
        <taxon>Actinomycetes</taxon>
        <taxon>Mycobacteriales</taxon>
        <taxon>Mycobacteriaceae</taxon>
        <taxon>Mycobacterium</taxon>
        <taxon>Mycobacterium tuberculosis complex</taxon>
    </lineage>
</organism>
<sequence length="329" mass="34871">MSMSSYPRQRPRRLRSTVAMRRLVAQTSLEPRHLVLPMFVADGIDEPRPITSMPGVVQHTRDSLRRAAAAAVAAGVGGLMLFGVPRDQDKDGVGSAGIDPDGILNVALRDLAKDLGEATVLMADTCLDEFTDHGHCGVLDDRGRVDNDATVARYVELAVAQAESGAHVVGPSGMMDGQVAAIRDGLDAAGYIDVVILAYAAKFASAFYGPFREAVSSSLSGDRRTYQQEPGNAAEALREIELDLDEGADIVMVKPAMGYLDVVAAAADVSPVPVAAYQVSGEYAMIRAAAANNWIDERAAVLESLTGIRRAGADIVLTYWAVDAAGWLT</sequence>
<name>HEM2_MYCTU</name>
<gene>
    <name type="primary">hemB</name>
    <name type="ordered locus">Rv0512</name>
    <name type="ORF">MTCY20G10.02</name>
</gene>